<dbReference type="EMBL" id="DQ917522">
    <property type="protein sequence ID" value="ABK63551.1"/>
    <property type="molecule type" value="mRNA"/>
</dbReference>
<dbReference type="EMBL" id="EF025513">
    <property type="protein sequence ID" value="ABM86985.1"/>
    <property type="molecule type" value="mRNA"/>
</dbReference>
<dbReference type="EMBL" id="EU401858">
    <property type="protein sequence ID" value="ACC77807.1"/>
    <property type="molecule type" value="Genomic_DNA"/>
</dbReference>
<dbReference type="SMR" id="A6MFL1"/>
<dbReference type="MEROPS" id="I02.052"/>
<dbReference type="GO" id="GO:0005615">
    <property type="term" value="C:extracellular space"/>
    <property type="evidence" value="ECO:0007669"/>
    <property type="project" value="TreeGrafter"/>
</dbReference>
<dbReference type="GO" id="GO:0004867">
    <property type="term" value="F:serine-type endopeptidase inhibitor activity"/>
    <property type="evidence" value="ECO:0007669"/>
    <property type="project" value="UniProtKB-KW"/>
</dbReference>
<dbReference type="CDD" id="cd22594">
    <property type="entry name" value="Kunitz_textilinin-like"/>
    <property type="match status" value="1"/>
</dbReference>
<dbReference type="FunFam" id="4.10.410.10:FF:000020">
    <property type="entry name" value="Collagen, type VI, alpha 3"/>
    <property type="match status" value="1"/>
</dbReference>
<dbReference type="Gene3D" id="4.10.410.10">
    <property type="entry name" value="Pancreatic trypsin inhibitor Kunitz domain"/>
    <property type="match status" value="1"/>
</dbReference>
<dbReference type="InterPro" id="IPR002223">
    <property type="entry name" value="Kunitz_BPTI"/>
</dbReference>
<dbReference type="InterPro" id="IPR036880">
    <property type="entry name" value="Kunitz_BPTI_sf"/>
</dbReference>
<dbReference type="InterPro" id="IPR020901">
    <property type="entry name" value="Prtase_inh_Kunz-CS"/>
</dbReference>
<dbReference type="InterPro" id="IPR050098">
    <property type="entry name" value="TFPI/VKTCI-like"/>
</dbReference>
<dbReference type="PANTHER" id="PTHR10083:SF374">
    <property type="entry name" value="BPTI_KUNITZ INHIBITOR DOMAIN-CONTAINING PROTEIN"/>
    <property type="match status" value="1"/>
</dbReference>
<dbReference type="PANTHER" id="PTHR10083">
    <property type="entry name" value="KUNITZ-TYPE PROTEASE INHIBITOR-RELATED"/>
    <property type="match status" value="1"/>
</dbReference>
<dbReference type="Pfam" id="PF00014">
    <property type="entry name" value="Kunitz_BPTI"/>
    <property type="match status" value="1"/>
</dbReference>
<dbReference type="PRINTS" id="PR00759">
    <property type="entry name" value="BASICPTASE"/>
</dbReference>
<dbReference type="SMART" id="SM00131">
    <property type="entry name" value="KU"/>
    <property type="match status" value="1"/>
</dbReference>
<dbReference type="SUPFAM" id="SSF57362">
    <property type="entry name" value="BPTI-like"/>
    <property type="match status" value="1"/>
</dbReference>
<dbReference type="PROSITE" id="PS00280">
    <property type="entry name" value="BPTI_KUNITZ_1"/>
    <property type="match status" value="1"/>
</dbReference>
<dbReference type="PROSITE" id="PS50279">
    <property type="entry name" value="BPTI_KUNITZ_2"/>
    <property type="match status" value="1"/>
</dbReference>
<keyword id="KW-1015">Disulfide bond</keyword>
<keyword id="KW-0646">Protease inhibitor</keyword>
<keyword id="KW-0964">Secreted</keyword>
<keyword id="KW-0722">Serine protease inhibitor</keyword>
<keyword id="KW-0732">Signal</keyword>
<accession>A6MFL1</accession>
<reference key="1">
    <citation type="journal article" date="2007" name="J. Proteome Res.">
        <title>Diversity of toxic components from the venom of the evolutionarily distinct black whip snake, Demansia vestigiata.</title>
        <authorList>
            <person name="St Pierre L."/>
            <person name="Birrell G.W."/>
            <person name="Earl S.T.H."/>
            <person name="Wallis T.P."/>
            <person name="Gorman J.J."/>
            <person name="de Jersey J."/>
            <person name="Masci P.P."/>
            <person name="Lavin M.F."/>
        </authorList>
    </citation>
    <scope>NUCLEOTIDE SEQUENCE [MRNA]</scope>
    <source>
        <tissue>Venom gland</tissue>
    </source>
</reference>
<reference key="2">
    <citation type="journal article" date="2008" name="Cell. Mol. Life Sci.">
        <title>Common evolution of waprin and Kunitz-like toxin families in Australian venomous snakes.</title>
        <authorList>
            <person name="St Pierre L."/>
            <person name="Earl S.T."/>
            <person name="Filippovich I."/>
            <person name="Sorokina N."/>
            <person name="Masci P.P."/>
            <person name="De Jersey J."/>
            <person name="Lavin M.F."/>
        </authorList>
    </citation>
    <scope>NUCLEOTIDE SEQUENCE [GENOMIC DNA]</scope>
    <source>
        <tissue>Venom gland</tissue>
    </source>
</reference>
<feature type="signal peptide" evidence="2">
    <location>
        <begin position="1"/>
        <end position="24"/>
    </location>
</feature>
<feature type="chain" id="PRO_5000254115" description="Kunitz-type serine protease inhibitor vestiginin-1">
    <location>
        <begin position="25"/>
        <end position="83"/>
    </location>
</feature>
<feature type="domain" description="BPTI/Kunitz inhibitor" evidence="3">
    <location>
        <begin position="31"/>
        <end position="81"/>
    </location>
</feature>
<feature type="site" description="Reactive bond for chymotrypsin" evidence="1">
    <location>
        <begin position="41"/>
        <end position="42"/>
    </location>
</feature>
<feature type="disulfide bond" evidence="3">
    <location>
        <begin position="31"/>
        <end position="81"/>
    </location>
</feature>
<feature type="disulfide bond" evidence="3">
    <location>
        <begin position="40"/>
        <end position="64"/>
    </location>
</feature>
<feature type="disulfide bond" evidence="3">
    <location>
        <begin position="56"/>
        <end position="77"/>
    </location>
</feature>
<evidence type="ECO:0000250" key="1"/>
<evidence type="ECO:0000255" key="2"/>
<evidence type="ECO:0000255" key="3">
    <source>
        <dbReference type="PROSITE-ProRule" id="PRU00031"/>
    </source>
</evidence>
<evidence type="ECO:0000305" key="4"/>
<name>VKT1_DEMVE</name>
<sequence>MSSGGLLLLLGLLTLWAELTPVSSKDRPEFCELPPDRGTCMGFLQAFYYNPSQNKCLPFMFGGCKANPNNFKTLEECKRTCAA</sequence>
<protein>
    <recommendedName>
        <fullName>Kunitz-type serine protease inhibitor vestiginin-1</fullName>
    </recommendedName>
    <alternativeName>
        <fullName>Vestiginin-6</fullName>
    </alternativeName>
</protein>
<proteinExistence type="evidence at transcript level"/>
<comment type="function">
    <text evidence="1">Serine protease inhibitor.</text>
</comment>
<comment type="subcellular location">
    <subcellularLocation>
        <location evidence="1">Secreted</location>
    </subcellularLocation>
</comment>
<comment type="tissue specificity">
    <text>Expressed by the venom gland.</text>
</comment>
<comment type="similarity">
    <text evidence="4">Belongs to the venom Kunitz-type family.</text>
</comment>
<organism>
    <name type="scientific">Demansia vestigiata</name>
    <name type="common">Lesser black whip snake</name>
    <name type="synonym">Demansia atra</name>
    <dbReference type="NCBI Taxonomy" id="412038"/>
    <lineage>
        <taxon>Eukaryota</taxon>
        <taxon>Metazoa</taxon>
        <taxon>Chordata</taxon>
        <taxon>Craniata</taxon>
        <taxon>Vertebrata</taxon>
        <taxon>Euteleostomi</taxon>
        <taxon>Lepidosauria</taxon>
        <taxon>Squamata</taxon>
        <taxon>Bifurcata</taxon>
        <taxon>Unidentata</taxon>
        <taxon>Episquamata</taxon>
        <taxon>Toxicofera</taxon>
        <taxon>Serpentes</taxon>
        <taxon>Colubroidea</taxon>
        <taxon>Elapidae</taxon>
        <taxon>Notechinae</taxon>
        <taxon>Demansia</taxon>
    </lineage>
</organism>